<feature type="chain" id="PRO_0000123307" description="Small ribosomal subunit protein uS11c">
    <location>
        <begin position="1"/>
        <end position="130"/>
    </location>
</feature>
<name>RR11_MARPO</name>
<organism>
    <name type="scientific">Marchantia polymorpha</name>
    <name type="common">Common liverwort</name>
    <name type="synonym">Marchantia aquatica</name>
    <dbReference type="NCBI Taxonomy" id="3197"/>
    <lineage>
        <taxon>Eukaryota</taxon>
        <taxon>Viridiplantae</taxon>
        <taxon>Streptophyta</taxon>
        <taxon>Embryophyta</taxon>
        <taxon>Marchantiophyta</taxon>
        <taxon>Marchantiopsida</taxon>
        <taxon>Marchantiidae</taxon>
        <taxon>Marchantiales</taxon>
        <taxon>Marchantiaceae</taxon>
        <taxon>Marchantia</taxon>
    </lineage>
</organism>
<evidence type="ECO:0000255" key="1">
    <source>
        <dbReference type="HAMAP-Rule" id="MF_01310"/>
    </source>
</evidence>
<evidence type="ECO:0000305" key="2"/>
<gene>
    <name evidence="1" type="primary">rps11</name>
</gene>
<proteinExistence type="inferred from homology"/>
<accession>P06364</accession>
<comment type="subunit">
    <text evidence="1">Part of the 30S ribosomal subunit.</text>
</comment>
<comment type="subcellular location">
    <subcellularLocation>
        <location>Plastid</location>
        <location>Chloroplast</location>
    </subcellularLocation>
</comment>
<comment type="similarity">
    <text evidence="1">Belongs to the universal ribosomal protein uS11 family.</text>
</comment>
<protein>
    <recommendedName>
        <fullName evidence="1">Small ribosomal subunit protein uS11c</fullName>
    </recommendedName>
    <alternativeName>
        <fullName evidence="2">30S ribosomal protein S11, chloroplastic</fullName>
    </alternativeName>
</protein>
<keyword id="KW-0150">Chloroplast</keyword>
<keyword id="KW-0934">Plastid</keyword>
<keyword id="KW-0687">Ribonucleoprotein</keyword>
<keyword id="KW-0689">Ribosomal protein</keyword>
<keyword id="KW-0694">RNA-binding</keyword>
<keyword id="KW-0699">rRNA-binding</keyword>
<reference key="1">
    <citation type="journal article" date="1988" name="J. Mol. Biol.">
        <title>Structure and organization of Marchantia polymorpha chloroplast genome. III. Gene organization of the large single copy region from rbcL to trnI(CAU).</title>
        <authorList>
            <person name="Fukuzawa H."/>
            <person name="Kohchi T."/>
            <person name="Sano T."/>
            <person name="Shirai H."/>
            <person name="Umesono K."/>
            <person name="Inokuchi H."/>
            <person name="Ozeki H."/>
            <person name="Ohyama K."/>
        </authorList>
    </citation>
    <scope>NUCLEOTIDE SEQUENCE [GENOMIC DNA]</scope>
</reference>
<reference key="2">
    <citation type="journal article" date="1986" name="Nature">
        <title>Chloroplast gene organization deduced from complete sequence of liverwort Marchantia polymorpha chloroplast DNA.</title>
        <authorList>
            <person name="Ohyama K."/>
            <person name="Fukuzawa H."/>
            <person name="Kohchi T."/>
            <person name="Shirai H."/>
            <person name="Sano T."/>
            <person name="Sano S."/>
            <person name="Umesono K."/>
            <person name="Shiki Y."/>
            <person name="Takeuchi M."/>
            <person name="Chang Z."/>
            <person name="Aota S."/>
            <person name="Inokuchi H."/>
            <person name="Ozeki H."/>
        </authorList>
    </citation>
    <scope>NUCLEOTIDE SEQUENCE [LARGE SCALE GENOMIC DNA]</scope>
</reference>
<dbReference type="EMBL" id="X04465">
    <property type="protein sequence ID" value="CAA28118.1"/>
    <property type="molecule type" value="Genomic_DNA"/>
</dbReference>
<dbReference type="PIR" id="A02723">
    <property type="entry name" value="R3LV11"/>
</dbReference>
<dbReference type="RefSeq" id="NP_039332.1">
    <property type="nucleotide sequence ID" value="NC_001319.1"/>
</dbReference>
<dbReference type="RefSeq" id="YP_009646845.1">
    <property type="nucleotide sequence ID" value="NC_042505.1"/>
</dbReference>
<dbReference type="SMR" id="P06364"/>
<dbReference type="GeneID" id="2702565"/>
<dbReference type="GeneID" id="40386699"/>
<dbReference type="GO" id="GO:0009507">
    <property type="term" value="C:chloroplast"/>
    <property type="evidence" value="ECO:0007669"/>
    <property type="project" value="UniProtKB-SubCell"/>
</dbReference>
<dbReference type="GO" id="GO:1990904">
    <property type="term" value="C:ribonucleoprotein complex"/>
    <property type="evidence" value="ECO:0007669"/>
    <property type="project" value="UniProtKB-KW"/>
</dbReference>
<dbReference type="GO" id="GO:0005840">
    <property type="term" value="C:ribosome"/>
    <property type="evidence" value="ECO:0007669"/>
    <property type="project" value="UniProtKB-KW"/>
</dbReference>
<dbReference type="GO" id="GO:0019843">
    <property type="term" value="F:rRNA binding"/>
    <property type="evidence" value="ECO:0007669"/>
    <property type="project" value="UniProtKB-UniRule"/>
</dbReference>
<dbReference type="GO" id="GO:0003735">
    <property type="term" value="F:structural constituent of ribosome"/>
    <property type="evidence" value="ECO:0007669"/>
    <property type="project" value="InterPro"/>
</dbReference>
<dbReference type="GO" id="GO:0006412">
    <property type="term" value="P:translation"/>
    <property type="evidence" value="ECO:0007669"/>
    <property type="project" value="UniProtKB-UniRule"/>
</dbReference>
<dbReference type="FunFam" id="3.30.420.80:FF:000003">
    <property type="entry name" value="30S ribosomal protein S11, chloroplastic"/>
    <property type="match status" value="1"/>
</dbReference>
<dbReference type="Gene3D" id="3.30.420.80">
    <property type="entry name" value="Ribosomal protein S11"/>
    <property type="match status" value="1"/>
</dbReference>
<dbReference type="HAMAP" id="MF_01310">
    <property type="entry name" value="Ribosomal_uS11"/>
    <property type="match status" value="1"/>
</dbReference>
<dbReference type="InterPro" id="IPR001971">
    <property type="entry name" value="Ribosomal_uS11"/>
</dbReference>
<dbReference type="InterPro" id="IPR019981">
    <property type="entry name" value="Ribosomal_uS11_bac-type"/>
</dbReference>
<dbReference type="InterPro" id="IPR018102">
    <property type="entry name" value="Ribosomal_uS11_CS"/>
</dbReference>
<dbReference type="InterPro" id="IPR036967">
    <property type="entry name" value="Ribosomal_uS11_sf"/>
</dbReference>
<dbReference type="NCBIfam" id="NF003698">
    <property type="entry name" value="PRK05309.1"/>
    <property type="match status" value="1"/>
</dbReference>
<dbReference type="NCBIfam" id="TIGR03632">
    <property type="entry name" value="uS11_bact"/>
    <property type="match status" value="1"/>
</dbReference>
<dbReference type="PANTHER" id="PTHR11759">
    <property type="entry name" value="40S RIBOSOMAL PROTEIN S14/30S RIBOSOMAL PROTEIN S11"/>
    <property type="match status" value="1"/>
</dbReference>
<dbReference type="Pfam" id="PF00411">
    <property type="entry name" value="Ribosomal_S11"/>
    <property type="match status" value="1"/>
</dbReference>
<dbReference type="PIRSF" id="PIRSF002131">
    <property type="entry name" value="Ribosomal_S11"/>
    <property type="match status" value="1"/>
</dbReference>
<dbReference type="SUPFAM" id="SSF53137">
    <property type="entry name" value="Translational machinery components"/>
    <property type="match status" value="1"/>
</dbReference>
<dbReference type="PROSITE" id="PS00054">
    <property type="entry name" value="RIBOSOMAL_S11"/>
    <property type="match status" value="1"/>
</dbReference>
<geneLocation type="chloroplast"/>
<sequence length="130" mass="14173">MPKSVKKINLRKGKRRLPKGVIHIQASFNNTIVTVTDIRGQVVSWSSAGACGFKGTKKSTPFAAQTAAENAIRILIDQGMKQAEVMISGPGPGRDTALRAIRRSGIILSFVRDVTPMPHNGCRPPRKRRV</sequence>